<comment type="cofactor">
    <cofactor evidence="1">
        <name>heme</name>
        <dbReference type="ChEBI" id="CHEBI:30413"/>
    </cofactor>
</comment>
<comment type="subcellular location">
    <subcellularLocation>
        <location evidence="3">Membrane</location>
        <topology evidence="3">Single-pass membrane protein</topology>
    </subcellularLocation>
</comment>
<comment type="similarity">
    <text evidence="3">Belongs to the cytochrome P450 family.</text>
</comment>
<evidence type="ECO:0000250" key="1"/>
<evidence type="ECO:0000255" key="2"/>
<evidence type="ECO:0000305" key="3"/>
<proteinExistence type="evidence at transcript level"/>
<dbReference type="EC" id="1.14.-.-"/>
<dbReference type="EMBL" id="BT021040">
    <property type="protein sequence ID" value="AAX09057.1"/>
    <property type="molecule type" value="mRNA"/>
</dbReference>
<dbReference type="RefSeq" id="NP_001015644.1">
    <property type="nucleotide sequence ID" value="NM_001015644.1"/>
</dbReference>
<dbReference type="SMR" id="Q5E980"/>
<dbReference type="FunCoup" id="Q5E980">
    <property type="interactions" value="2484"/>
</dbReference>
<dbReference type="STRING" id="9913.ENSBTAP00000001132"/>
<dbReference type="PaxDb" id="9913-ENSBTAP00000001132"/>
<dbReference type="GeneID" id="532945"/>
<dbReference type="KEGG" id="bta:532945"/>
<dbReference type="CTD" id="57404"/>
<dbReference type="VEuPathDB" id="HostDB:ENSBTAG00000000851"/>
<dbReference type="eggNOG" id="KOG0157">
    <property type="taxonomic scope" value="Eukaryota"/>
</dbReference>
<dbReference type="HOGENOM" id="CLU_050960_1_0_1"/>
<dbReference type="InParanoid" id="Q5E980"/>
<dbReference type="OMA" id="YFQVWSE"/>
<dbReference type="OrthoDB" id="1470350at2759"/>
<dbReference type="TreeFam" id="TF105089"/>
<dbReference type="Proteomes" id="UP000009136">
    <property type="component" value="Chromosome 2"/>
</dbReference>
<dbReference type="Bgee" id="ENSBTAG00000000851">
    <property type="expression patterns" value="Expressed in corpus epididymis and 109 other cell types or tissues"/>
</dbReference>
<dbReference type="GO" id="GO:0016020">
    <property type="term" value="C:membrane"/>
    <property type="evidence" value="ECO:0007669"/>
    <property type="project" value="UniProtKB-SubCell"/>
</dbReference>
<dbReference type="GO" id="GO:0020037">
    <property type="term" value="F:heme binding"/>
    <property type="evidence" value="ECO:0007669"/>
    <property type="project" value="InterPro"/>
</dbReference>
<dbReference type="GO" id="GO:0005506">
    <property type="term" value="F:iron ion binding"/>
    <property type="evidence" value="ECO:0007669"/>
    <property type="project" value="InterPro"/>
</dbReference>
<dbReference type="GO" id="GO:0004497">
    <property type="term" value="F:monooxygenase activity"/>
    <property type="evidence" value="ECO:0007669"/>
    <property type="project" value="UniProtKB-KW"/>
</dbReference>
<dbReference type="GO" id="GO:0016705">
    <property type="term" value="F:oxidoreductase activity, acting on paired donors, with incorporation or reduction of molecular oxygen"/>
    <property type="evidence" value="ECO:0007669"/>
    <property type="project" value="InterPro"/>
</dbReference>
<dbReference type="CDD" id="cd20627">
    <property type="entry name" value="CYP20A1"/>
    <property type="match status" value="1"/>
</dbReference>
<dbReference type="Gene3D" id="1.10.630.10">
    <property type="entry name" value="Cytochrome P450"/>
    <property type="match status" value="1"/>
</dbReference>
<dbReference type="InterPro" id="IPR052666">
    <property type="entry name" value="CYP450_20A1-like"/>
</dbReference>
<dbReference type="InterPro" id="IPR001128">
    <property type="entry name" value="Cyt_P450"/>
</dbReference>
<dbReference type="InterPro" id="IPR002401">
    <property type="entry name" value="Cyt_P450_E_grp-I"/>
</dbReference>
<dbReference type="InterPro" id="IPR036396">
    <property type="entry name" value="Cyt_P450_sf"/>
</dbReference>
<dbReference type="PANTHER" id="PTHR24280">
    <property type="entry name" value="CYTOCHROME P450 20A1"/>
    <property type="match status" value="1"/>
</dbReference>
<dbReference type="PANTHER" id="PTHR24280:SF4">
    <property type="entry name" value="CYTOCHROME P450 20A1"/>
    <property type="match status" value="1"/>
</dbReference>
<dbReference type="Pfam" id="PF00067">
    <property type="entry name" value="p450"/>
    <property type="match status" value="1"/>
</dbReference>
<dbReference type="PRINTS" id="PR00463">
    <property type="entry name" value="EP450I"/>
</dbReference>
<dbReference type="SUPFAM" id="SSF48264">
    <property type="entry name" value="Cytochrome P450"/>
    <property type="match status" value="1"/>
</dbReference>
<organism>
    <name type="scientific">Bos taurus</name>
    <name type="common">Bovine</name>
    <dbReference type="NCBI Taxonomy" id="9913"/>
    <lineage>
        <taxon>Eukaryota</taxon>
        <taxon>Metazoa</taxon>
        <taxon>Chordata</taxon>
        <taxon>Craniata</taxon>
        <taxon>Vertebrata</taxon>
        <taxon>Euteleostomi</taxon>
        <taxon>Mammalia</taxon>
        <taxon>Eutheria</taxon>
        <taxon>Laurasiatheria</taxon>
        <taxon>Artiodactyla</taxon>
        <taxon>Ruminantia</taxon>
        <taxon>Pecora</taxon>
        <taxon>Bovidae</taxon>
        <taxon>Bovinae</taxon>
        <taxon>Bos</taxon>
    </lineage>
</organism>
<gene>
    <name type="primary">CYP20A1</name>
</gene>
<name>CP20A_BOVIN</name>
<keyword id="KW-0349">Heme</keyword>
<keyword id="KW-0408">Iron</keyword>
<keyword id="KW-0472">Membrane</keyword>
<keyword id="KW-0479">Metal-binding</keyword>
<keyword id="KW-0503">Monooxygenase</keyword>
<keyword id="KW-0560">Oxidoreductase</keyword>
<keyword id="KW-1185">Reference proteome</keyword>
<keyword id="KW-0812">Transmembrane</keyword>
<keyword id="KW-1133">Transmembrane helix</keyword>
<feature type="chain" id="PRO_0000318094" description="Cytochrome P450 20A1">
    <location>
        <begin position="1"/>
        <end position="462"/>
    </location>
</feature>
<feature type="transmembrane region" description="Helical" evidence="2">
    <location>
        <begin position="4"/>
        <end position="24"/>
    </location>
</feature>
<feature type="binding site" description="axial binding residue" evidence="1">
    <location>
        <position position="409"/>
    </location>
    <ligand>
        <name>heme</name>
        <dbReference type="ChEBI" id="CHEBI:30413"/>
    </ligand>
    <ligandPart>
        <name>Fe</name>
        <dbReference type="ChEBI" id="CHEBI:18248"/>
    </ligandPart>
</feature>
<sequence>MLDFAIFAVTFLLALVGAVLYLYPASRQAAGIPGITPTEEKDGNLPDIVNSGSLHEFLVNLHERYGPVVSFWFGRRLVVSLGTVDVLKQHINPNKTLDPFETMLKSLLRYQSDSGNVSENHMRKKLYENGVTNCLRSNFALLIKLSEELLDKWLSYPESQHVPLCQHMLGFAMKSVTQMVMGSTFEDEQEVIRFQKNHGTVWSEIGKGFLDGSLDKSTTRKKQYEDALMQLESILKKIIKERKGRNFSQHIFIDSLVQGNLNDQQILEDTMIFSLASCMITAKLCTWAVCFLTTYEEIQKKLYEEIDQVLGKGPITSEKIEELRYCRQVLCETVRTAKLTPVSARLQDIEGKIDKFIIPRETLVLYALGVVLQDPGTWSSPYKFDPERFDDESVMKTFSLLGFSGTRECPELRFAYMVTAVLLSVLLRRLHLLSVEGQVIETKYELVTSSKEEAWITVSKRY</sequence>
<accession>Q5E980</accession>
<reference key="1">
    <citation type="journal article" date="2005" name="BMC Genomics">
        <title>Characterization of 954 bovine full-CDS cDNA sequences.</title>
        <authorList>
            <person name="Harhay G.P."/>
            <person name="Sonstegard T.S."/>
            <person name="Keele J.W."/>
            <person name="Heaton M.P."/>
            <person name="Clawson M.L."/>
            <person name="Snelling W.M."/>
            <person name="Wiedmann R.T."/>
            <person name="Van Tassell C.P."/>
            <person name="Smith T.P.L."/>
        </authorList>
    </citation>
    <scope>NUCLEOTIDE SEQUENCE [LARGE SCALE MRNA]</scope>
</reference>
<protein>
    <recommendedName>
        <fullName>Cytochrome P450 20A1</fullName>
        <ecNumber>1.14.-.-</ecNumber>
    </recommendedName>
</protein>